<reference key="1">
    <citation type="journal article" date="2001" name="J. Bacteriol.">
        <title>Genome sequence and comparative analysis of the solvent-producing bacterium Clostridium acetobutylicum.</title>
        <authorList>
            <person name="Noelling J."/>
            <person name="Breton G."/>
            <person name="Omelchenko M.V."/>
            <person name="Makarova K.S."/>
            <person name="Zeng Q."/>
            <person name="Gibson R."/>
            <person name="Lee H.M."/>
            <person name="Dubois J."/>
            <person name="Qiu D."/>
            <person name="Hitti J."/>
            <person name="Wolf Y.I."/>
            <person name="Tatusov R.L."/>
            <person name="Sabathe F."/>
            <person name="Doucette-Stamm L.A."/>
            <person name="Soucaille P."/>
            <person name="Daly M.J."/>
            <person name="Bennett G.N."/>
            <person name="Koonin E.V."/>
            <person name="Smith D.R."/>
        </authorList>
    </citation>
    <scope>NUCLEOTIDE SEQUENCE [LARGE SCALE GENOMIC DNA]</scope>
    <source>
        <strain>ATCC 824 / DSM 792 / JCM 1419 / IAM 19013 / LMG 5710 / NBRC 13948 / NRRL B-527 / VKM B-1787 / 2291 / W</strain>
    </source>
</reference>
<sequence>MIKSFNEIIMKVKSKEMKKVAVAVAQDEPVLEAVRDAKKNGIADAILVGDHDEIVSIALKIGMDVNDFEIVNEPNVKKAALKAVELVSTGKADMVMKGLVNTATFLRSVLNKEVGLRTGKTMSHVAVFETEKFDRLLFLTDVAFNTYPELKEKIDIVNNSVKVAHAIGIENPKVAPICAVEVINPKMPSTLDAAMLSKMSDRGQIKGCVVDGPLALDIALSEEAAHHKGVTGEVAGKADIFLMPNIETGNVMYKTLTYTTDSKNGGILVGTSAPVVLTSRADSHETKMNSIALAALVAGNK</sequence>
<gene>
    <name type="primary">ptb</name>
    <name type="ordered locus">CA_C3076</name>
</gene>
<name>PTB_CLOAB</name>
<evidence type="ECO:0000250" key="1"/>
<evidence type="ECO:0000305" key="2"/>
<evidence type="ECO:0007829" key="3">
    <source>
        <dbReference type="PDB" id="7VG9"/>
    </source>
</evidence>
<comment type="function">
    <text evidence="1">Catalyzes the conversion of butyryl-CoA through butyryl phosphate to butyrate.</text>
</comment>
<comment type="catalytic activity">
    <reaction>
        <text>butanoyl-CoA + phosphate = butanoyl phosphate + CoA</text>
        <dbReference type="Rhea" id="RHEA:20892"/>
        <dbReference type="ChEBI" id="CHEBI:43474"/>
        <dbReference type="ChEBI" id="CHEBI:57287"/>
        <dbReference type="ChEBI" id="CHEBI:57371"/>
        <dbReference type="ChEBI" id="CHEBI:58079"/>
        <dbReference type="EC" id="2.3.1.19"/>
    </reaction>
</comment>
<comment type="pathway">
    <text>Lipid metabolism; butanoate metabolism.</text>
</comment>
<comment type="similarity">
    <text evidence="2">Belongs to the phosphate acetyltransferase and butyryltransferase family.</text>
</comment>
<organism>
    <name type="scientific">Clostridium acetobutylicum (strain ATCC 824 / DSM 792 / JCM 1419 / IAM 19013 / LMG 5710 / NBRC 13948 / NRRL B-527 / VKM B-1787 / 2291 / W)</name>
    <dbReference type="NCBI Taxonomy" id="272562"/>
    <lineage>
        <taxon>Bacteria</taxon>
        <taxon>Bacillati</taxon>
        <taxon>Bacillota</taxon>
        <taxon>Clostridia</taxon>
        <taxon>Eubacteriales</taxon>
        <taxon>Clostridiaceae</taxon>
        <taxon>Clostridium</taxon>
    </lineage>
</organism>
<keyword id="KW-0002">3D-structure</keyword>
<keyword id="KW-0012">Acyltransferase</keyword>
<keyword id="KW-1185">Reference proteome</keyword>
<keyword id="KW-0808">Transferase</keyword>
<dbReference type="EC" id="2.3.1.19"/>
<dbReference type="EMBL" id="AE001437">
    <property type="protein sequence ID" value="AAK81016.1"/>
    <property type="molecule type" value="Genomic_DNA"/>
</dbReference>
<dbReference type="PIR" id="E97278">
    <property type="entry name" value="E97278"/>
</dbReference>
<dbReference type="RefSeq" id="NP_349676.1">
    <property type="nucleotide sequence ID" value="NC_003030.1"/>
</dbReference>
<dbReference type="RefSeq" id="WP_010966357.1">
    <property type="nucleotide sequence ID" value="NC_003030.1"/>
</dbReference>
<dbReference type="PDB" id="7VG9">
    <property type="method" value="X-ray"/>
    <property type="resolution" value="2.91 A"/>
    <property type="chains" value="A/B/C/D/E/F/G/H=1-301"/>
</dbReference>
<dbReference type="PDBsum" id="7VG9"/>
<dbReference type="SMR" id="P58255"/>
<dbReference type="STRING" id="272562.CA_C3076"/>
<dbReference type="GeneID" id="44999563"/>
<dbReference type="KEGG" id="cac:CA_C3076"/>
<dbReference type="PATRIC" id="fig|272562.8.peg.3259"/>
<dbReference type="eggNOG" id="COG0280">
    <property type="taxonomic scope" value="Bacteria"/>
</dbReference>
<dbReference type="HOGENOM" id="CLU_056531_0_0_9"/>
<dbReference type="OrthoDB" id="9774179at2"/>
<dbReference type="BioCyc" id="MetaCyc:PTBCLOS-MONOMER"/>
<dbReference type="BRENDA" id="2.3.1.19">
    <property type="organism ID" value="1452"/>
</dbReference>
<dbReference type="SABIO-RK" id="P58255"/>
<dbReference type="UniPathway" id="UPA00863"/>
<dbReference type="Proteomes" id="UP000000814">
    <property type="component" value="Chromosome"/>
</dbReference>
<dbReference type="GO" id="GO:0050182">
    <property type="term" value="F:phosphate butyryltransferase activity"/>
    <property type="evidence" value="ECO:0007669"/>
    <property type="project" value="UniProtKB-EC"/>
</dbReference>
<dbReference type="GO" id="GO:0019605">
    <property type="term" value="P:butyrate metabolic process"/>
    <property type="evidence" value="ECO:0007669"/>
    <property type="project" value="UniProtKB-UniPathway"/>
</dbReference>
<dbReference type="Gene3D" id="3.40.718.10">
    <property type="entry name" value="Isopropylmalate Dehydrogenase"/>
    <property type="match status" value="1"/>
</dbReference>
<dbReference type="InterPro" id="IPR012147">
    <property type="entry name" value="P_Ac_Bu_trans"/>
</dbReference>
<dbReference type="InterPro" id="IPR050500">
    <property type="entry name" value="Phos_Acetyltrans/Butyryltrans"/>
</dbReference>
<dbReference type="InterPro" id="IPR014079">
    <property type="entry name" value="Phosphate_butyryltransferase"/>
</dbReference>
<dbReference type="InterPro" id="IPR002505">
    <property type="entry name" value="PTA_PTB"/>
</dbReference>
<dbReference type="NCBIfam" id="TIGR02706">
    <property type="entry name" value="P_butyryltrans"/>
    <property type="match status" value="1"/>
</dbReference>
<dbReference type="NCBIfam" id="NF004472">
    <property type="entry name" value="PRK05805.1"/>
    <property type="match status" value="1"/>
</dbReference>
<dbReference type="NCBIfam" id="NF006045">
    <property type="entry name" value="PRK08190.1"/>
    <property type="match status" value="1"/>
</dbReference>
<dbReference type="PANTHER" id="PTHR43356">
    <property type="entry name" value="PHOSPHATE ACETYLTRANSFERASE"/>
    <property type="match status" value="1"/>
</dbReference>
<dbReference type="PANTHER" id="PTHR43356:SF2">
    <property type="entry name" value="PHOSPHATE ACETYLTRANSFERASE"/>
    <property type="match status" value="1"/>
</dbReference>
<dbReference type="Pfam" id="PF01515">
    <property type="entry name" value="PTA_PTB"/>
    <property type="match status" value="1"/>
</dbReference>
<dbReference type="PIRSF" id="PIRSF000428">
    <property type="entry name" value="P_Ac_trans"/>
    <property type="match status" value="1"/>
</dbReference>
<dbReference type="SUPFAM" id="SSF53659">
    <property type="entry name" value="Isocitrate/Isopropylmalate dehydrogenase-like"/>
    <property type="match status" value="1"/>
</dbReference>
<feature type="chain" id="PRO_0000179152" description="Phosphate butyryltransferase">
    <location>
        <begin position="1"/>
        <end position="301"/>
    </location>
</feature>
<feature type="helix" evidence="3">
    <location>
        <begin position="5"/>
        <end position="14"/>
    </location>
</feature>
<feature type="strand" evidence="3">
    <location>
        <begin position="19"/>
        <end position="24"/>
    </location>
</feature>
<feature type="helix" evidence="3">
    <location>
        <begin position="28"/>
        <end position="39"/>
    </location>
</feature>
<feature type="strand" evidence="3">
    <location>
        <begin position="44"/>
        <end position="49"/>
    </location>
</feature>
<feature type="helix" evidence="3">
    <location>
        <begin position="51"/>
        <end position="61"/>
    </location>
</feature>
<feature type="helix" evidence="3">
    <location>
        <begin position="65"/>
        <end position="67"/>
    </location>
</feature>
<feature type="strand" evidence="3">
    <location>
        <begin position="68"/>
        <end position="72"/>
    </location>
</feature>
<feature type="helix" evidence="3">
    <location>
        <begin position="76"/>
        <end position="88"/>
    </location>
</feature>
<feature type="strand" evidence="3">
    <location>
        <begin position="93"/>
        <end position="96"/>
    </location>
</feature>
<feature type="helix" evidence="3">
    <location>
        <begin position="102"/>
        <end position="109"/>
    </location>
</feature>
<feature type="turn" evidence="3">
    <location>
        <begin position="112"/>
        <end position="114"/>
    </location>
</feature>
<feature type="strand" evidence="3">
    <location>
        <begin position="123"/>
        <end position="129"/>
    </location>
</feature>
<feature type="strand" evidence="3">
    <location>
        <begin position="137"/>
        <end position="144"/>
    </location>
</feature>
<feature type="helix" evidence="3">
    <location>
        <begin position="150"/>
        <end position="167"/>
    </location>
</feature>
<feature type="strand" evidence="3">
    <location>
        <begin position="173"/>
        <end position="177"/>
    </location>
</feature>
<feature type="helix" evidence="3">
    <location>
        <begin position="188"/>
        <end position="201"/>
    </location>
</feature>
<feature type="strand" evidence="3">
    <location>
        <begin position="207"/>
        <end position="210"/>
    </location>
</feature>
<feature type="helix" evidence="3">
    <location>
        <begin position="216"/>
        <end position="220"/>
    </location>
</feature>
<feature type="helix" evidence="3">
    <location>
        <begin position="222"/>
        <end position="226"/>
    </location>
</feature>
<feature type="turn" evidence="3">
    <location>
        <begin position="227"/>
        <end position="229"/>
    </location>
</feature>
<feature type="strand" evidence="3">
    <location>
        <begin position="232"/>
        <end position="234"/>
    </location>
</feature>
<feature type="strand" evidence="3">
    <location>
        <begin position="239"/>
        <end position="242"/>
    </location>
</feature>
<feature type="helix" evidence="3">
    <location>
        <begin position="246"/>
        <end position="259"/>
    </location>
</feature>
<feature type="strand" evidence="3">
    <location>
        <begin position="263"/>
        <end position="273"/>
    </location>
</feature>
<feature type="helix" evidence="3">
    <location>
        <begin position="284"/>
        <end position="300"/>
    </location>
</feature>
<proteinExistence type="evidence at protein level"/>
<accession>P58255</accession>
<protein>
    <recommendedName>
        <fullName>Phosphate butyryltransferase</fullName>
        <ecNumber>2.3.1.19</ecNumber>
    </recommendedName>
    <alternativeName>
        <fullName>Phosphotransbutyrylase</fullName>
    </alternativeName>
</protein>